<sequence length="64" mass="7263">MARKDQISHRGPLSGNNRSHALNATKRKFNLNLQQITLKTASGKKIRLKVSAKTKKTLRKWGHV</sequence>
<proteinExistence type="inferred from homology"/>
<protein>
    <recommendedName>
        <fullName evidence="1">Large ribosomal subunit protein bL28</fullName>
    </recommendedName>
    <alternativeName>
        <fullName evidence="3">50S ribosomal protein L28</fullName>
    </alternativeName>
</protein>
<comment type="similarity">
    <text evidence="1">Belongs to the bacterial ribosomal protein bL28 family.</text>
</comment>
<evidence type="ECO:0000255" key="1">
    <source>
        <dbReference type="HAMAP-Rule" id="MF_00373"/>
    </source>
</evidence>
<evidence type="ECO:0000256" key="2">
    <source>
        <dbReference type="SAM" id="MobiDB-lite"/>
    </source>
</evidence>
<evidence type="ECO:0000305" key="3"/>
<dbReference type="EMBL" id="AE017243">
    <property type="protein sequence ID" value="AAZ44210.1"/>
    <property type="molecule type" value="Genomic_DNA"/>
</dbReference>
<dbReference type="RefSeq" id="WP_011283923.1">
    <property type="nucleotide sequence ID" value="NC_007295.1"/>
</dbReference>
<dbReference type="SMR" id="Q4AAL1"/>
<dbReference type="GeneID" id="41334420"/>
<dbReference type="KEGG" id="mhj:MHJ_0118"/>
<dbReference type="eggNOG" id="COG0227">
    <property type="taxonomic scope" value="Bacteria"/>
</dbReference>
<dbReference type="HOGENOM" id="CLU_064548_7_2_14"/>
<dbReference type="OrthoDB" id="9805609at2"/>
<dbReference type="Proteomes" id="UP000000548">
    <property type="component" value="Chromosome"/>
</dbReference>
<dbReference type="GO" id="GO:1990904">
    <property type="term" value="C:ribonucleoprotein complex"/>
    <property type="evidence" value="ECO:0007669"/>
    <property type="project" value="UniProtKB-KW"/>
</dbReference>
<dbReference type="GO" id="GO:0005840">
    <property type="term" value="C:ribosome"/>
    <property type="evidence" value="ECO:0007669"/>
    <property type="project" value="UniProtKB-KW"/>
</dbReference>
<dbReference type="GO" id="GO:0003735">
    <property type="term" value="F:structural constituent of ribosome"/>
    <property type="evidence" value="ECO:0007669"/>
    <property type="project" value="InterPro"/>
</dbReference>
<dbReference type="GO" id="GO:0006412">
    <property type="term" value="P:translation"/>
    <property type="evidence" value="ECO:0007669"/>
    <property type="project" value="UniProtKB-UniRule"/>
</dbReference>
<dbReference type="Gene3D" id="2.30.170.40">
    <property type="entry name" value="Ribosomal protein L28/L24"/>
    <property type="match status" value="1"/>
</dbReference>
<dbReference type="HAMAP" id="MF_00373">
    <property type="entry name" value="Ribosomal_bL28"/>
    <property type="match status" value="1"/>
</dbReference>
<dbReference type="InterPro" id="IPR050096">
    <property type="entry name" value="Bacterial_rp_bL28"/>
</dbReference>
<dbReference type="InterPro" id="IPR026569">
    <property type="entry name" value="Ribosomal_bL28"/>
</dbReference>
<dbReference type="InterPro" id="IPR034704">
    <property type="entry name" value="Ribosomal_bL28/bL31-like_sf"/>
</dbReference>
<dbReference type="InterPro" id="IPR001383">
    <property type="entry name" value="Ribosomal_bL28_bact-type"/>
</dbReference>
<dbReference type="InterPro" id="IPR037147">
    <property type="entry name" value="Ribosomal_bL28_sf"/>
</dbReference>
<dbReference type="NCBIfam" id="TIGR00009">
    <property type="entry name" value="L28"/>
    <property type="match status" value="1"/>
</dbReference>
<dbReference type="PANTHER" id="PTHR39080">
    <property type="entry name" value="50S RIBOSOMAL PROTEIN L28"/>
    <property type="match status" value="1"/>
</dbReference>
<dbReference type="PANTHER" id="PTHR39080:SF1">
    <property type="entry name" value="LARGE RIBOSOMAL SUBUNIT PROTEIN BL28A"/>
    <property type="match status" value="1"/>
</dbReference>
<dbReference type="Pfam" id="PF00830">
    <property type="entry name" value="Ribosomal_L28"/>
    <property type="match status" value="1"/>
</dbReference>
<dbReference type="SUPFAM" id="SSF143800">
    <property type="entry name" value="L28p-like"/>
    <property type="match status" value="1"/>
</dbReference>
<feature type="chain" id="PRO_1000007281" description="Large ribosomal subunit protein bL28">
    <location>
        <begin position="1"/>
        <end position="64"/>
    </location>
</feature>
<feature type="region of interest" description="Disordered" evidence="2">
    <location>
        <begin position="1"/>
        <end position="23"/>
    </location>
</feature>
<gene>
    <name evidence="1" type="primary">rpmB</name>
    <name type="ordered locus">MHJ_0118</name>
</gene>
<accession>Q4AAL1</accession>
<organism>
    <name type="scientific">Mesomycoplasma hyopneumoniae (strain J / ATCC 25934 / NCTC 10110)</name>
    <name type="common">Mycoplasma hyopneumoniae</name>
    <dbReference type="NCBI Taxonomy" id="262719"/>
    <lineage>
        <taxon>Bacteria</taxon>
        <taxon>Bacillati</taxon>
        <taxon>Mycoplasmatota</taxon>
        <taxon>Mycoplasmoidales</taxon>
        <taxon>Metamycoplasmataceae</taxon>
        <taxon>Mesomycoplasma</taxon>
    </lineage>
</organism>
<reference key="1">
    <citation type="journal article" date="2005" name="J. Bacteriol.">
        <title>Swine and poultry pathogens: the complete genome sequences of two strains of Mycoplasma hyopneumoniae and a strain of Mycoplasma synoviae.</title>
        <authorList>
            <person name="Vasconcelos A.T.R."/>
            <person name="Ferreira H.B."/>
            <person name="Bizarro C.V."/>
            <person name="Bonatto S.L."/>
            <person name="Carvalho M.O."/>
            <person name="Pinto P.M."/>
            <person name="Almeida D.F."/>
            <person name="Almeida L.G.P."/>
            <person name="Almeida R."/>
            <person name="Alves-Junior L."/>
            <person name="Assuncao E.N."/>
            <person name="Azevedo V.A.C."/>
            <person name="Bogo M.R."/>
            <person name="Brigido M.M."/>
            <person name="Brocchi M."/>
            <person name="Burity H.A."/>
            <person name="Camargo A.A."/>
            <person name="Camargo S.S."/>
            <person name="Carepo M.S."/>
            <person name="Carraro D.M."/>
            <person name="de Mattos Cascardo J.C."/>
            <person name="Castro L.A."/>
            <person name="Cavalcanti G."/>
            <person name="Chemale G."/>
            <person name="Collevatti R.G."/>
            <person name="Cunha C.W."/>
            <person name="Dallagiovanna B."/>
            <person name="Dambros B.P."/>
            <person name="Dellagostin O.A."/>
            <person name="Falcao C."/>
            <person name="Fantinatti-Garboggini F."/>
            <person name="Felipe M.S.S."/>
            <person name="Fiorentin L."/>
            <person name="Franco G.R."/>
            <person name="Freitas N.S.A."/>
            <person name="Frias D."/>
            <person name="Grangeiro T.B."/>
            <person name="Grisard E.C."/>
            <person name="Guimaraes C.T."/>
            <person name="Hungria M."/>
            <person name="Jardim S.N."/>
            <person name="Krieger M.A."/>
            <person name="Laurino J.P."/>
            <person name="Lima L.F.A."/>
            <person name="Lopes M.I."/>
            <person name="Loreto E.L.S."/>
            <person name="Madeira H.M.F."/>
            <person name="Manfio G.P."/>
            <person name="Maranhao A.Q."/>
            <person name="Martinkovics C.T."/>
            <person name="Medeiros S.R.B."/>
            <person name="Moreira M.A.M."/>
            <person name="Neiva M."/>
            <person name="Ramalho-Neto C.E."/>
            <person name="Nicolas M.F."/>
            <person name="Oliveira S.C."/>
            <person name="Paixao R.F.C."/>
            <person name="Pedrosa F.O."/>
            <person name="Pena S.D.J."/>
            <person name="Pereira M."/>
            <person name="Pereira-Ferrari L."/>
            <person name="Piffer I."/>
            <person name="Pinto L.S."/>
            <person name="Potrich D.P."/>
            <person name="Salim A.C.M."/>
            <person name="Santos F.R."/>
            <person name="Schmitt R."/>
            <person name="Schneider M.P.C."/>
            <person name="Schrank A."/>
            <person name="Schrank I.S."/>
            <person name="Schuck A.F."/>
            <person name="Seuanez H.N."/>
            <person name="Silva D.W."/>
            <person name="Silva R."/>
            <person name="Silva S.C."/>
            <person name="Soares C.M.A."/>
            <person name="Souza K.R.L."/>
            <person name="Souza R.C."/>
            <person name="Staats C.C."/>
            <person name="Steffens M.B.R."/>
            <person name="Teixeira S.M.R."/>
            <person name="Urmenyi T.P."/>
            <person name="Vainstein M.H."/>
            <person name="Zuccherato L.W."/>
            <person name="Simpson A.J.G."/>
            <person name="Zaha A."/>
        </authorList>
    </citation>
    <scope>NUCLEOTIDE SEQUENCE [LARGE SCALE GENOMIC DNA]</scope>
    <source>
        <strain>J / ATCC 25934 / NCTC 10110</strain>
    </source>
</reference>
<keyword id="KW-0687">Ribonucleoprotein</keyword>
<keyword id="KW-0689">Ribosomal protein</keyword>
<name>RL28_MESHJ</name>